<sequence length="531" mass="60309">MDIISIVLLVLLVVLVVAFIFYAQNIKKNKQDAESLFNEAENKANEVMASAKREAESLKREAEAFKKEARYTLREEEQKQRREIEDEFKQERQELKETEKRLKQREEILDRKDDTLTKKEENLDSKEENLVRKTDTLSKREEQLAHIEEKKRLELERISNLSMDDAREIILSETRDGLTKEMAQTIRQSEEKAQAEADKRAKNIISLAIQRVSSDSVAEQTVSVVNLPDDGMKGRIIGREGRNIRTFEALTGIDVIIDDTPEAVVLSGFDPIRREIARMTLEQLVQDGRIHPARIEELVEKNRKALDHKMREYGEQAAFEVGAHNLHPDLMKIMGRLHFRTSYGQNVLDHSVEVAHIAGNLAGEMGENEALAKRSGFLHDIGKALDHEVEGSHVEIGTELARKYKENPIVINTIASHHGDTEPLSNIAVLVAAADALSAARPGARRESIENYIKRLKDLEAISTSFDGVETAFALQAGREIRVMVKPDKLTDDQIVILARDVKNRIEDEMDYPGNIKVTVIRETRAIDYAK</sequence>
<feature type="chain" id="PRO_0000344899" description="Ribonuclease Y">
    <location>
        <begin position="1"/>
        <end position="531"/>
    </location>
</feature>
<feature type="transmembrane region" description="Helical" evidence="1">
    <location>
        <begin position="3"/>
        <end position="23"/>
    </location>
</feature>
<feature type="domain" description="KH" evidence="1">
    <location>
        <begin position="221"/>
        <end position="281"/>
    </location>
</feature>
<feature type="domain" description="HD" evidence="2">
    <location>
        <begin position="347"/>
        <end position="440"/>
    </location>
</feature>
<gene>
    <name evidence="1" type="primary">rny</name>
    <name type="ordered locus">llmg_2156</name>
</gene>
<comment type="function">
    <text evidence="1">Endoribonuclease that initiates mRNA decay.</text>
</comment>
<comment type="subcellular location">
    <subcellularLocation>
        <location evidence="1">Cell membrane</location>
        <topology evidence="1">Single-pass membrane protein</topology>
    </subcellularLocation>
</comment>
<comment type="similarity">
    <text evidence="1">Belongs to the RNase Y family.</text>
</comment>
<dbReference type="EC" id="3.1.-.-" evidence="1"/>
<dbReference type="EMBL" id="AM406671">
    <property type="protein sequence ID" value="CAL98723.1"/>
    <property type="molecule type" value="Genomic_DNA"/>
</dbReference>
<dbReference type="RefSeq" id="WP_011835860.1">
    <property type="nucleotide sequence ID" value="NC_009004.1"/>
</dbReference>
<dbReference type="SMR" id="A2RN36"/>
<dbReference type="STRING" id="416870.llmg_2156"/>
<dbReference type="KEGG" id="llm:llmg_2156"/>
<dbReference type="eggNOG" id="COG1418">
    <property type="taxonomic scope" value="Bacteria"/>
</dbReference>
<dbReference type="HOGENOM" id="CLU_028328_1_0_9"/>
<dbReference type="OrthoDB" id="9803205at2"/>
<dbReference type="PhylomeDB" id="A2RN36"/>
<dbReference type="Proteomes" id="UP000000364">
    <property type="component" value="Chromosome"/>
</dbReference>
<dbReference type="GO" id="GO:0005886">
    <property type="term" value="C:plasma membrane"/>
    <property type="evidence" value="ECO:0007669"/>
    <property type="project" value="UniProtKB-SubCell"/>
</dbReference>
<dbReference type="GO" id="GO:0003723">
    <property type="term" value="F:RNA binding"/>
    <property type="evidence" value="ECO:0007669"/>
    <property type="project" value="UniProtKB-UniRule"/>
</dbReference>
<dbReference type="GO" id="GO:0004521">
    <property type="term" value="F:RNA endonuclease activity"/>
    <property type="evidence" value="ECO:0007669"/>
    <property type="project" value="UniProtKB-UniRule"/>
</dbReference>
<dbReference type="GO" id="GO:0006402">
    <property type="term" value="P:mRNA catabolic process"/>
    <property type="evidence" value="ECO:0007669"/>
    <property type="project" value="UniProtKB-UniRule"/>
</dbReference>
<dbReference type="CDD" id="cd00077">
    <property type="entry name" value="HDc"/>
    <property type="match status" value="1"/>
</dbReference>
<dbReference type="CDD" id="cd22431">
    <property type="entry name" value="KH-I_RNaseY"/>
    <property type="match status" value="1"/>
</dbReference>
<dbReference type="FunFam" id="1.10.3210.10:FF:000003">
    <property type="entry name" value="Ribonuclease Y"/>
    <property type="match status" value="1"/>
</dbReference>
<dbReference type="FunFam" id="3.30.1370.10:FF:000006">
    <property type="entry name" value="Ribonuclease Y"/>
    <property type="match status" value="1"/>
</dbReference>
<dbReference type="Gene3D" id="1.10.3210.10">
    <property type="entry name" value="Hypothetical protein af1432"/>
    <property type="match status" value="1"/>
</dbReference>
<dbReference type="Gene3D" id="3.30.1370.10">
    <property type="entry name" value="K Homology domain, type 1"/>
    <property type="match status" value="1"/>
</dbReference>
<dbReference type="HAMAP" id="MF_00335">
    <property type="entry name" value="RNase_Y"/>
    <property type="match status" value="1"/>
</dbReference>
<dbReference type="InterPro" id="IPR003607">
    <property type="entry name" value="HD/PDEase_dom"/>
</dbReference>
<dbReference type="InterPro" id="IPR006674">
    <property type="entry name" value="HD_domain"/>
</dbReference>
<dbReference type="InterPro" id="IPR006675">
    <property type="entry name" value="HDIG_dom"/>
</dbReference>
<dbReference type="InterPro" id="IPR004087">
    <property type="entry name" value="KH_dom"/>
</dbReference>
<dbReference type="InterPro" id="IPR004088">
    <property type="entry name" value="KH_dom_type_1"/>
</dbReference>
<dbReference type="InterPro" id="IPR036612">
    <property type="entry name" value="KH_dom_type_1_sf"/>
</dbReference>
<dbReference type="InterPro" id="IPR017705">
    <property type="entry name" value="Ribonuclease_Y"/>
</dbReference>
<dbReference type="InterPro" id="IPR022711">
    <property type="entry name" value="RNase_Y_N"/>
</dbReference>
<dbReference type="NCBIfam" id="TIGR00277">
    <property type="entry name" value="HDIG"/>
    <property type="match status" value="1"/>
</dbReference>
<dbReference type="NCBIfam" id="TIGR03319">
    <property type="entry name" value="RNase_Y"/>
    <property type="match status" value="1"/>
</dbReference>
<dbReference type="PANTHER" id="PTHR12826">
    <property type="entry name" value="RIBONUCLEASE Y"/>
    <property type="match status" value="1"/>
</dbReference>
<dbReference type="PANTHER" id="PTHR12826:SF15">
    <property type="entry name" value="RIBONUCLEASE Y"/>
    <property type="match status" value="1"/>
</dbReference>
<dbReference type="Pfam" id="PF01966">
    <property type="entry name" value="HD"/>
    <property type="match status" value="1"/>
</dbReference>
<dbReference type="Pfam" id="PF00013">
    <property type="entry name" value="KH_1"/>
    <property type="match status" value="1"/>
</dbReference>
<dbReference type="Pfam" id="PF12072">
    <property type="entry name" value="RNase_Y_N"/>
    <property type="match status" value="1"/>
</dbReference>
<dbReference type="SMART" id="SM00471">
    <property type="entry name" value="HDc"/>
    <property type="match status" value="1"/>
</dbReference>
<dbReference type="SMART" id="SM00322">
    <property type="entry name" value="KH"/>
    <property type="match status" value="1"/>
</dbReference>
<dbReference type="SUPFAM" id="SSF54791">
    <property type="entry name" value="Eukaryotic type KH-domain (KH-domain type I)"/>
    <property type="match status" value="1"/>
</dbReference>
<dbReference type="SUPFAM" id="SSF109604">
    <property type="entry name" value="HD-domain/PDEase-like"/>
    <property type="match status" value="1"/>
</dbReference>
<dbReference type="PROSITE" id="PS51831">
    <property type="entry name" value="HD"/>
    <property type="match status" value="1"/>
</dbReference>
<dbReference type="PROSITE" id="PS50084">
    <property type="entry name" value="KH_TYPE_1"/>
    <property type="match status" value="1"/>
</dbReference>
<keyword id="KW-1003">Cell membrane</keyword>
<keyword id="KW-0255">Endonuclease</keyword>
<keyword id="KW-0378">Hydrolase</keyword>
<keyword id="KW-0472">Membrane</keyword>
<keyword id="KW-0540">Nuclease</keyword>
<keyword id="KW-0694">RNA-binding</keyword>
<keyword id="KW-0812">Transmembrane</keyword>
<keyword id="KW-1133">Transmembrane helix</keyword>
<proteinExistence type="inferred from homology"/>
<accession>A2RN36</accession>
<protein>
    <recommendedName>
        <fullName evidence="1">Ribonuclease Y</fullName>
        <shortName evidence="1">RNase Y</shortName>
        <ecNumber evidence="1">3.1.-.-</ecNumber>
    </recommendedName>
</protein>
<name>RNY_LACLM</name>
<reference key="1">
    <citation type="journal article" date="2007" name="J. Bacteriol.">
        <title>The complete genome sequence of the lactic acid bacterial paradigm Lactococcus lactis subsp. cremoris MG1363.</title>
        <authorList>
            <person name="Wegmann U."/>
            <person name="O'Connell-Motherway M."/>
            <person name="Zomer A."/>
            <person name="Buist G."/>
            <person name="Shearman C."/>
            <person name="Canchaya C."/>
            <person name="Ventura M."/>
            <person name="Goesmann A."/>
            <person name="Gasson M.J."/>
            <person name="Kuipers O.P."/>
            <person name="van Sinderen D."/>
            <person name="Kok J."/>
        </authorList>
    </citation>
    <scope>NUCLEOTIDE SEQUENCE [LARGE SCALE GENOMIC DNA]</scope>
    <source>
        <strain>MG1363</strain>
    </source>
</reference>
<evidence type="ECO:0000255" key="1">
    <source>
        <dbReference type="HAMAP-Rule" id="MF_00335"/>
    </source>
</evidence>
<evidence type="ECO:0000255" key="2">
    <source>
        <dbReference type="PROSITE-ProRule" id="PRU01175"/>
    </source>
</evidence>
<organism>
    <name type="scientific">Lactococcus lactis subsp. cremoris (strain MG1363)</name>
    <dbReference type="NCBI Taxonomy" id="416870"/>
    <lineage>
        <taxon>Bacteria</taxon>
        <taxon>Bacillati</taxon>
        <taxon>Bacillota</taxon>
        <taxon>Bacilli</taxon>
        <taxon>Lactobacillales</taxon>
        <taxon>Streptococcaceae</taxon>
        <taxon>Lactococcus</taxon>
        <taxon>Lactococcus cremoris subsp. cremoris</taxon>
    </lineage>
</organism>